<reference evidence="3" key="1">
    <citation type="journal article" date="1999" name="Nature">
        <title>Sequence and analysis of chromosome 2 of the plant Arabidopsis thaliana.</title>
        <authorList>
            <person name="Lin X."/>
            <person name="Kaul S."/>
            <person name="Rounsley S.D."/>
            <person name="Shea T.P."/>
            <person name="Benito M.-I."/>
            <person name="Town C.D."/>
            <person name="Fujii C.Y."/>
            <person name="Mason T.M."/>
            <person name="Bowman C.L."/>
            <person name="Barnstead M.E."/>
            <person name="Feldblyum T.V."/>
            <person name="Buell C.R."/>
            <person name="Ketchum K.A."/>
            <person name="Lee J.J."/>
            <person name="Ronning C.M."/>
            <person name="Koo H.L."/>
            <person name="Moffat K.S."/>
            <person name="Cronin L.A."/>
            <person name="Shen M."/>
            <person name="Pai G."/>
            <person name="Van Aken S."/>
            <person name="Umayam L."/>
            <person name="Tallon L.J."/>
            <person name="Gill J.E."/>
            <person name="Adams M.D."/>
            <person name="Carrera A.J."/>
            <person name="Creasy T.H."/>
            <person name="Goodman H.M."/>
            <person name="Somerville C.R."/>
            <person name="Copenhaver G.P."/>
            <person name="Preuss D."/>
            <person name="Nierman W.C."/>
            <person name="White O."/>
            <person name="Eisen J.A."/>
            <person name="Salzberg S.L."/>
            <person name="Fraser C.M."/>
            <person name="Venter J.C."/>
        </authorList>
    </citation>
    <scope>NUCLEOTIDE SEQUENCE [LARGE SCALE GENOMIC DNA]</scope>
    <source>
        <strain>cv. Columbia</strain>
    </source>
</reference>
<reference key="2">
    <citation type="journal article" date="2017" name="Plant J.">
        <title>Araport11: a complete reannotation of the Arabidopsis thaliana reference genome.</title>
        <authorList>
            <person name="Cheng C.Y."/>
            <person name="Krishnakumar V."/>
            <person name="Chan A.P."/>
            <person name="Thibaud-Nissen F."/>
            <person name="Schobel S."/>
            <person name="Town C.D."/>
        </authorList>
    </citation>
    <scope>GENOME REANNOTATION</scope>
    <source>
        <strain>cv. Columbia</strain>
    </source>
</reference>
<reference evidence="3" key="3">
    <citation type="journal article" date="2001" name="Plant Mol. Biol.">
        <title>Two large Arabidopsis thaliana gene families are homologous to the Brassica gene superfamily that encodes pollen coat proteins and the male component of the self-incompatibility response.</title>
        <authorList>
            <person name="Vanoosthuyse V."/>
            <person name="Miege C."/>
            <person name="Dumas C."/>
            <person name="Cock J.M."/>
        </authorList>
    </citation>
    <scope>IDENTIFICATION</scope>
</reference>
<reference key="4">
    <citation type="journal article" date="2005" name="Plant Physiol.">
        <title>Genome organization of more than 300 defensin-like genes in Arabidopsis.</title>
        <authorList>
            <person name="Silverstein K.A.T."/>
            <person name="Graham M.A."/>
            <person name="Paape T.D."/>
            <person name="VandenBosch K.A."/>
        </authorList>
    </citation>
    <scope>GENE FAMILY</scope>
</reference>
<dbReference type="EMBL" id="AC006304">
    <property type="status" value="NOT_ANNOTATED_CDS"/>
    <property type="molecule type" value="Genomic_DNA"/>
</dbReference>
<dbReference type="EMBL" id="CP002685">
    <property type="protein sequence ID" value="AEC06296.1"/>
    <property type="molecule type" value="Genomic_DNA"/>
</dbReference>
<dbReference type="RefSeq" id="NP_001031354.1">
    <property type="nucleotide sequence ID" value="NM_001036277.2"/>
</dbReference>
<dbReference type="SMR" id="P82637"/>
<dbReference type="PaxDb" id="3702-AT2G14282.1"/>
<dbReference type="ProteomicsDB" id="224202"/>
<dbReference type="EnsemblPlants" id="AT2G14282.1">
    <property type="protein sequence ID" value="AT2G14282.1"/>
    <property type="gene ID" value="AT2G14282"/>
</dbReference>
<dbReference type="GeneID" id="3768195"/>
<dbReference type="Gramene" id="AT2G14282.1">
    <property type="protein sequence ID" value="AT2G14282.1"/>
    <property type="gene ID" value="AT2G14282"/>
</dbReference>
<dbReference type="KEGG" id="ath:AT2G14282"/>
<dbReference type="Araport" id="AT2G14282"/>
<dbReference type="TAIR" id="AT2G14282">
    <property type="gene designation" value="SCRL18"/>
</dbReference>
<dbReference type="HOGENOM" id="CLU_2349619_0_0_1"/>
<dbReference type="InParanoid" id="P82637"/>
<dbReference type="PhylomeDB" id="P82637"/>
<dbReference type="PRO" id="PR:P82637"/>
<dbReference type="Proteomes" id="UP000006548">
    <property type="component" value="Chromosome 2"/>
</dbReference>
<dbReference type="ExpressionAtlas" id="P82637">
    <property type="expression patterns" value="baseline"/>
</dbReference>
<dbReference type="GO" id="GO:0005576">
    <property type="term" value="C:extracellular region"/>
    <property type="evidence" value="ECO:0007669"/>
    <property type="project" value="UniProtKB-SubCell"/>
</dbReference>
<dbReference type="GO" id="GO:0050832">
    <property type="term" value="P:defense response to fungus"/>
    <property type="evidence" value="ECO:0007669"/>
    <property type="project" value="UniProtKB-KW"/>
</dbReference>
<dbReference type="GO" id="GO:0031640">
    <property type="term" value="P:killing of cells of another organism"/>
    <property type="evidence" value="ECO:0007669"/>
    <property type="project" value="UniProtKB-KW"/>
</dbReference>
<dbReference type="GO" id="GO:0007165">
    <property type="term" value="P:signal transduction"/>
    <property type="evidence" value="ECO:0007669"/>
    <property type="project" value="InterPro"/>
</dbReference>
<dbReference type="InterPro" id="IPR010682">
    <property type="entry name" value="SCRL"/>
</dbReference>
<dbReference type="PANTHER" id="PTHR34450:SF6">
    <property type="entry name" value="DEFENSIN-LIKE PROTEIN 241-RELATED"/>
    <property type="match status" value="1"/>
</dbReference>
<dbReference type="PANTHER" id="PTHR34450">
    <property type="entry name" value="DEFENSIN-LIKE PROTEIN 245-RELATED"/>
    <property type="match status" value="1"/>
</dbReference>
<sequence>MRYTTSFIVFCFYIFLFTNLVQGGLVRICNHRIEGYGTCGPNGRKICLDAFWKNQPSPGLSKNLEGCQCEDRRKRPQFKGLSHSCSCCWSYQGNSDE</sequence>
<organism evidence="3">
    <name type="scientific">Arabidopsis thaliana</name>
    <name type="common">Mouse-ear cress</name>
    <dbReference type="NCBI Taxonomy" id="3702"/>
    <lineage>
        <taxon>Eukaryota</taxon>
        <taxon>Viridiplantae</taxon>
        <taxon>Streptophyta</taxon>
        <taxon>Embryophyta</taxon>
        <taxon>Tracheophyta</taxon>
        <taxon>Spermatophyta</taxon>
        <taxon>Magnoliopsida</taxon>
        <taxon>eudicotyledons</taxon>
        <taxon>Gunneridae</taxon>
        <taxon>Pentapetalae</taxon>
        <taxon>rosids</taxon>
        <taxon>malvids</taxon>
        <taxon>Brassicales</taxon>
        <taxon>Brassicaceae</taxon>
        <taxon>Camelineae</taxon>
        <taxon>Arabidopsis</taxon>
    </lineage>
</organism>
<comment type="subcellular location">
    <subcellularLocation>
        <location evidence="1">Secreted</location>
    </subcellularLocation>
</comment>
<comment type="similarity">
    <text evidence="3">Belongs to the DEFL family.</text>
</comment>
<evidence type="ECO:0000250" key="1"/>
<evidence type="ECO:0000255" key="2"/>
<evidence type="ECO:0000305" key="3"/>
<proteinExistence type="inferred from homology"/>
<name>DF240_ARATH</name>
<accession>P82637</accession>
<protein>
    <recommendedName>
        <fullName>Putative defensin-like protein 240</fullName>
    </recommendedName>
    <alternativeName>
        <fullName>Putative S locus cysteine-rich-like protein 18</fullName>
        <shortName>Protein SCRL18</shortName>
        <shortName>SCR-like protein 18</shortName>
    </alternativeName>
</protein>
<feature type="signal peptide" evidence="2">
    <location>
        <begin position="1"/>
        <end position="23"/>
    </location>
</feature>
<feature type="chain" id="PRO_0000031944" description="Putative defensin-like protein 240">
    <location>
        <begin position="24"/>
        <end position="97"/>
    </location>
</feature>
<feature type="disulfide bond" evidence="1">
    <location>
        <begin position="29"/>
        <end position="88"/>
    </location>
</feature>
<feature type="disulfide bond" evidence="1">
    <location>
        <begin position="39"/>
        <end position="69"/>
    </location>
</feature>
<feature type="disulfide bond" evidence="1">
    <location>
        <begin position="47"/>
        <end position="85"/>
    </location>
</feature>
<feature type="disulfide bond" evidence="1">
    <location>
        <begin position="67"/>
        <end position="87"/>
    </location>
</feature>
<keyword id="KW-0929">Antimicrobial</keyword>
<keyword id="KW-1015">Disulfide bond</keyword>
<keyword id="KW-0295">Fungicide</keyword>
<keyword id="KW-0611">Plant defense</keyword>
<keyword id="KW-1185">Reference proteome</keyword>
<keyword id="KW-0964">Secreted</keyword>
<keyword id="KW-0732">Signal</keyword>
<gene>
    <name type="primary">SCRL18</name>
    <name type="ordered locus">At2g14282</name>
    <name type="ORF">T1O16</name>
</gene>